<gene>
    <name evidence="1" type="primary">eno</name>
    <name type="ordered locus">SPT_1173</name>
</gene>
<accession>C1CRM6</accession>
<comment type="function">
    <text evidence="1">Catalyzes the reversible conversion of 2-phosphoglycerate (2-PG) into phosphoenolpyruvate (PEP). It is essential for the degradation of carbohydrates via glycolysis.</text>
</comment>
<comment type="catalytic activity">
    <reaction evidence="1">
        <text>(2R)-2-phosphoglycerate = phosphoenolpyruvate + H2O</text>
        <dbReference type="Rhea" id="RHEA:10164"/>
        <dbReference type="ChEBI" id="CHEBI:15377"/>
        <dbReference type="ChEBI" id="CHEBI:58289"/>
        <dbReference type="ChEBI" id="CHEBI:58702"/>
        <dbReference type="EC" id="4.2.1.11"/>
    </reaction>
</comment>
<comment type="cofactor">
    <cofactor evidence="1">
        <name>Mg(2+)</name>
        <dbReference type="ChEBI" id="CHEBI:18420"/>
    </cofactor>
    <text evidence="1">Binds a second Mg(2+) ion via substrate during catalysis.</text>
</comment>
<comment type="pathway">
    <text evidence="1">Carbohydrate degradation; glycolysis; pyruvate from D-glyceraldehyde 3-phosphate: step 4/5.</text>
</comment>
<comment type="subcellular location">
    <subcellularLocation>
        <location evidence="1">Cytoplasm</location>
    </subcellularLocation>
    <subcellularLocation>
        <location evidence="1">Secreted</location>
    </subcellularLocation>
    <subcellularLocation>
        <location evidence="1">Cell surface</location>
    </subcellularLocation>
    <text evidence="1">Fractions of enolase are present in both the cytoplasm and on the cell surface.</text>
</comment>
<comment type="similarity">
    <text evidence="1">Belongs to the enolase family.</text>
</comment>
<proteinExistence type="inferred from homology"/>
<organism>
    <name type="scientific">Streptococcus pneumoniae (strain Taiwan19F-14)</name>
    <dbReference type="NCBI Taxonomy" id="487213"/>
    <lineage>
        <taxon>Bacteria</taxon>
        <taxon>Bacillati</taxon>
        <taxon>Bacillota</taxon>
        <taxon>Bacilli</taxon>
        <taxon>Lactobacillales</taxon>
        <taxon>Streptococcaceae</taxon>
        <taxon>Streptococcus</taxon>
    </lineage>
</organism>
<evidence type="ECO:0000255" key="1">
    <source>
        <dbReference type="HAMAP-Rule" id="MF_00318"/>
    </source>
</evidence>
<protein>
    <recommendedName>
        <fullName evidence="1">Enolase</fullName>
        <ecNumber evidence="1">4.2.1.11</ecNumber>
    </recommendedName>
    <alternativeName>
        <fullName evidence="1">2-phospho-D-glycerate hydro-lyase</fullName>
    </alternativeName>
    <alternativeName>
        <fullName evidence="1">2-phosphoglycerate dehydratase</fullName>
    </alternativeName>
</protein>
<dbReference type="EC" id="4.2.1.11" evidence="1"/>
<dbReference type="EMBL" id="CP000921">
    <property type="protein sequence ID" value="ACO22436.1"/>
    <property type="molecule type" value="Genomic_DNA"/>
</dbReference>
<dbReference type="RefSeq" id="WP_000022813.1">
    <property type="nucleotide sequence ID" value="NC_012469.1"/>
</dbReference>
<dbReference type="SMR" id="C1CRM6"/>
<dbReference type="GeneID" id="93739591"/>
<dbReference type="KEGG" id="snt:SPT_1173"/>
<dbReference type="HOGENOM" id="CLU_031223_2_1_9"/>
<dbReference type="UniPathway" id="UPA00109">
    <property type="reaction ID" value="UER00187"/>
</dbReference>
<dbReference type="GO" id="GO:0009986">
    <property type="term" value="C:cell surface"/>
    <property type="evidence" value="ECO:0007669"/>
    <property type="project" value="UniProtKB-SubCell"/>
</dbReference>
<dbReference type="GO" id="GO:0005576">
    <property type="term" value="C:extracellular region"/>
    <property type="evidence" value="ECO:0007669"/>
    <property type="project" value="UniProtKB-SubCell"/>
</dbReference>
<dbReference type="GO" id="GO:0009274">
    <property type="term" value="C:peptidoglycan-based cell wall"/>
    <property type="evidence" value="ECO:0007669"/>
    <property type="project" value="UniProtKB-ARBA"/>
</dbReference>
<dbReference type="GO" id="GO:0000015">
    <property type="term" value="C:phosphopyruvate hydratase complex"/>
    <property type="evidence" value="ECO:0007669"/>
    <property type="project" value="InterPro"/>
</dbReference>
<dbReference type="GO" id="GO:0000287">
    <property type="term" value="F:magnesium ion binding"/>
    <property type="evidence" value="ECO:0007669"/>
    <property type="project" value="UniProtKB-UniRule"/>
</dbReference>
<dbReference type="GO" id="GO:0004634">
    <property type="term" value="F:phosphopyruvate hydratase activity"/>
    <property type="evidence" value="ECO:0007669"/>
    <property type="project" value="UniProtKB-UniRule"/>
</dbReference>
<dbReference type="GO" id="GO:0006096">
    <property type="term" value="P:glycolytic process"/>
    <property type="evidence" value="ECO:0007669"/>
    <property type="project" value="UniProtKB-UniRule"/>
</dbReference>
<dbReference type="CDD" id="cd03313">
    <property type="entry name" value="enolase"/>
    <property type="match status" value="1"/>
</dbReference>
<dbReference type="FunFam" id="3.20.20.120:FF:000001">
    <property type="entry name" value="Enolase"/>
    <property type="match status" value="1"/>
</dbReference>
<dbReference type="FunFam" id="3.30.390.10:FF:000001">
    <property type="entry name" value="Enolase"/>
    <property type="match status" value="1"/>
</dbReference>
<dbReference type="Gene3D" id="3.20.20.120">
    <property type="entry name" value="Enolase-like C-terminal domain"/>
    <property type="match status" value="1"/>
</dbReference>
<dbReference type="Gene3D" id="3.30.390.10">
    <property type="entry name" value="Enolase-like, N-terminal domain"/>
    <property type="match status" value="1"/>
</dbReference>
<dbReference type="HAMAP" id="MF_00318">
    <property type="entry name" value="Enolase"/>
    <property type="match status" value="1"/>
</dbReference>
<dbReference type="InterPro" id="IPR000941">
    <property type="entry name" value="Enolase"/>
</dbReference>
<dbReference type="InterPro" id="IPR036849">
    <property type="entry name" value="Enolase-like_C_sf"/>
</dbReference>
<dbReference type="InterPro" id="IPR029017">
    <property type="entry name" value="Enolase-like_N"/>
</dbReference>
<dbReference type="InterPro" id="IPR020810">
    <property type="entry name" value="Enolase_C"/>
</dbReference>
<dbReference type="InterPro" id="IPR020809">
    <property type="entry name" value="Enolase_CS"/>
</dbReference>
<dbReference type="InterPro" id="IPR020811">
    <property type="entry name" value="Enolase_N"/>
</dbReference>
<dbReference type="NCBIfam" id="TIGR01060">
    <property type="entry name" value="eno"/>
    <property type="match status" value="1"/>
</dbReference>
<dbReference type="PANTHER" id="PTHR11902">
    <property type="entry name" value="ENOLASE"/>
    <property type="match status" value="1"/>
</dbReference>
<dbReference type="PANTHER" id="PTHR11902:SF1">
    <property type="entry name" value="ENOLASE"/>
    <property type="match status" value="1"/>
</dbReference>
<dbReference type="Pfam" id="PF00113">
    <property type="entry name" value="Enolase_C"/>
    <property type="match status" value="1"/>
</dbReference>
<dbReference type="Pfam" id="PF03952">
    <property type="entry name" value="Enolase_N"/>
    <property type="match status" value="1"/>
</dbReference>
<dbReference type="PIRSF" id="PIRSF001400">
    <property type="entry name" value="Enolase"/>
    <property type="match status" value="1"/>
</dbReference>
<dbReference type="PRINTS" id="PR00148">
    <property type="entry name" value="ENOLASE"/>
</dbReference>
<dbReference type="SFLD" id="SFLDS00001">
    <property type="entry name" value="Enolase"/>
    <property type="match status" value="1"/>
</dbReference>
<dbReference type="SFLD" id="SFLDF00002">
    <property type="entry name" value="enolase"/>
    <property type="match status" value="1"/>
</dbReference>
<dbReference type="SMART" id="SM01192">
    <property type="entry name" value="Enolase_C"/>
    <property type="match status" value="1"/>
</dbReference>
<dbReference type="SMART" id="SM01193">
    <property type="entry name" value="Enolase_N"/>
    <property type="match status" value="1"/>
</dbReference>
<dbReference type="SUPFAM" id="SSF51604">
    <property type="entry name" value="Enolase C-terminal domain-like"/>
    <property type="match status" value="1"/>
</dbReference>
<dbReference type="SUPFAM" id="SSF54826">
    <property type="entry name" value="Enolase N-terminal domain-like"/>
    <property type="match status" value="1"/>
</dbReference>
<dbReference type="PROSITE" id="PS00164">
    <property type="entry name" value="ENOLASE"/>
    <property type="match status" value="1"/>
</dbReference>
<keyword id="KW-0963">Cytoplasm</keyword>
<keyword id="KW-0324">Glycolysis</keyword>
<keyword id="KW-0456">Lyase</keyword>
<keyword id="KW-0460">Magnesium</keyword>
<keyword id="KW-0479">Metal-binding</keyword>
<keyword id="KW-0964">Secreted</keyword>
<name>ENO_STRZT</name>
<feature type="chain" id="PRO_1000133027" description="Enolase">
    <location>
        <begin position="1"/>
        <end position="434"/>
    </location>
</feature>
<feature type="active site" description="Proton donor" evidence="1">
    <location>
        <position position="205"/>
    </location>
</feature>
<feature type="active site" description="Proton acceptor" evidence="1">
    <location>
        <position position="343"/>
    </location>
</feature>
<feature type="binding site" evidence="1">
    <location>
        <position position="163"/>
    </location>
    <ligand>
        <name>(2R)-2-phosphoglycerate</name>
        <dbReference type="ChEBI" id="CHEBI:58289"/>
    </ligand>
</feature>
<feature type="binding site" evidence="1">
    <location>
        <position position="242"/>
    </location>
    <ligand>
        <name>Mg(2+)</name>
        <dbReference type="ChEBI" id="CHEBI:18420"/>
    </ligand>
</feature>
<feature type="binding site" evidence="1">
    <location>
        <position position="291"/>
    </location>
    <ligand>
        <name>Mg(2+)</name>
        <dbReference type="ChEBI" id="CHEBI:18420"/>
    </ligand>
</feature>
<feature type="binding site" evidence="1">
    <location>
        <position position="318"/>
    </location>
    <ligand>
        <name>Mg(2+)</name>
        <dbReference type="ChEBI" id="CHEBI:18420"/>
    </ligand>
</feature>
<feature type="binding site" evidence="1">
    <location>
        <position position="343"/>
    </location>
    <ligand>
        <name>(2R)-2-phosphoglycerate</name>
        <dbReference type="ChEBI" id="CHEBI:58289"/>
    </ligand>
</feature>
<feature type="binding site" evidence="1">
    <location>
        <position position="372"/>
    </location>
    <ligand>
        <name>(2R)-2-phosphoglycerate</name>
        <dbReference type="ChEBI" id="CHEBI:58289"/>
    </ligand>
</feature>
<feature type="binding site" evidence="1">
    <location>
        <position position="373"/>
    </location>
    <ligand>
        <name>(2R)-2-phosphoglycerate</name>
        <dbReference type="ChEBI" id="CHEBI:58289"/>
    </ligand>
</feature>
<feature type="binding site" evidence="1">
    <location>
        <position position="394"/>
    </location>
    <ligand>
        <name>(2R)-2-phosphoglycerate</name>
        <dbReference type="ChEBI" id="CHEBI:58289"/>
    </ligand>
</feature>
<reference key="1">
    <citation type="journal article" date="2010" name="Genome Biol.">
        <title>Structure and dynamics of the pan-genome of Streptococcus pneumoniae and closely related species.</title>
        <authorList>
            <person name="Donati C."/>
            <person name="Hiller N.L."/>
            <person name="Tettelin H."/>
            <person name="Muzzi A."/>
            <person name="Croucher N.J."/>
            <person name="Angiuoli S.V."/>
            <person name="Oggioni M."/>
            <person name="Dunning Hotopp J.C."/>
            <person name="Hu F.Z."/>
            <person name="Riley D.R."/>
            <person name="Covacci A."/>
            <person name="Mitchell T.J."/>
            <person name="Bentley S.D."/>
            <person name="Kilian M."/>
            <person name="Ehrlich G.D."/>
            <person name="Rappuoli R."/>
            <person name="Moxon E.R."/>
            <person name="Masignani V."/>
        </authorList>
    </citation>
    <scope>NUCLEOTIDE SEQUENCE [LARGE SCALE GENOMIC DNA]</scope>
    <source>
        <strain>Taiwan19F-14</strain>
    </source>
</reference>
<sequence length="434" mass="47103">MSIITDVYAREVLDSRGNPTLEVEVYTESGAFGRGMVPSGASTGEHEAVELRDGDKSRYGGLGTQKAVDNVNNIIAEAIIGYDVRDQQAIDRAMIALDGTPNKGKLGANAILGVSIAVARAAADYLEIPLYSYLGGFNTKVLPTPMMNIINGGSHSDAPIAFQEFMILPVGAPTFKEALRYGAEIFHALKKILKSRGLETAVGDEGGFAPRFEGTEDGVETILAAIEAAGYVPGKDVFIGFDCASSEFYDKERKVYDYTKFEGEGAAVRTSAEQIDYLEELVNKYPIITIEDGMDENDWDGWKALTERLGKKVQLVGDDFFVTNTDYLARGIQEGAANSILIKVNQIGTLTETFEAIEMAKEAGYTAVVSHRSGETEDSTIADIAVATNAGQIKTGSLSRTDRIAKYNQLLRIEDQLGEVAEYRGLKSFYNLKK</sequence>